<sequence length="111" mass="12094">MTRGFGPFGKIQEALKKAQEVRDGAQRLQKELEEMEIVGEAGNGLVKVTVNGNQEPLKVSLDPQVLQEPVDVVEDLLLTAMVNAYTQSAETMRKRMEELTGNISLPGLGLG</sequence>
<accession>Q2JUS2</accession>
<organism>
    <name type="scientific">Synechococcus sp. (strain JA-3-3Ab)</name>
    <name type="common">Cyanobacteria bacterium Yellowstone A-Prime</name>
    <dbReference type="NCBI Taxonomy" id="321327"/>
    <lineage>
        <taxon>Bacteria</taxon>
        <taxon>Bacillati</taxon>
        <taxon>Cyanobacteriota</taxon>
        <taxon>Cyanophyceae</taxon>
        <taxon>Synechococcales</taxon>
        <taxon>Synechococcaceae</taxon>
        <taxon>Synechococcus</taxon>
    </lineage>
</organism>
<dbReference type="EMBL" id="CP000239">
    <property type="protein sequence ID" value="ABC99540.1"/>
    <property type="molecule type" value="Genomic_DNA"/>
</dbReference>
<dbReference type="RefSeq" id="WP_011430218.1">
    <property type="nucleotide sequence ID" value="NC_007775.1"/>
</dbReference>
<dbReference type="SMR" id="Q2JUS2"/>
<dbReference type="STRING" id="321327.CYA_1369"/>
<dbReference type="KEGG" id="cya:CYA_1369"/>
<dbReference type="eggNOG" id="COG0718">
    <property type="taxonomic scope" value="Bacteria"/>
</dbReference>
<dbReference type="HOGENOM" id="CLU_140930_0_1_3"/>
<dbReference type="OrthoDB" id="487780at2"/>
<dbReference type="Proteomes" id="UP000008818">
    <property type="component" value="Chromosome"/>
</dbReference>
<dbReference type="GO" id="GO:0043590">
    <property type="term" value="C:bacterial nucleoid"/>
    <property type="evidence" value="ECO:0007669"/>
    <property type="project" value="UniProtKB-UniRule"/>
</dbReference>
<dbReference type="GO" id="GO:0005829">
    <property type="term" value="C:cytosol"/>
    <property type="evidence" value="ECO:0007669"/>
    <property type="project" value="TreeGrafter"/>
</dbReference>
<dbReference type="GO" id="GO:0003677">
    <property type="term" value="F:DNA binding"/>
    <property type="evidence" value="ECO:0007669"/>
    <property type="project" value="UniProtKB-UniRule"/>
</dbReference>
<dbReference type="Gene3D" id="3.30.1310.10">
    <property type="entry name" value="Nucleoid-associated protein YbaB-like domain"/>
    <property type="match status" value="1"/>
</dbReference>
<dbReference type="HAMAP" id="MF_00274">
    <property type="entry name" value="DNA_YbaB_EbfC"/>
    <property type="match status" value="1"/>
</dbReference>
<dbReference type="InterPro" id="IPR036894">
    <property type="entry name" value="YbaB-like_sf"/>
</dbReference>
<dbReference type="InterPro" id="IPR004401">
    <property type="entry name" value="YbaB/EbfC"/>
</dbReference>
<dbReference type="NCBIfam" id="TIGR00103">
    <property type="entry name" value="DNA_YbaB_EbfC"/>
    <property type="match status" value="1"/>
</dbReference>
<dbReference type="PANTHER" id="PTHR33449">
    <property type="entry name" value="NUCLEOID-ASSOCIATED PROTEIN YBAB"/>
    <property type="match status" value="1"/>
</dbReference>
<dbReference type="PANTHER" id="PTHR33449:SF1">
    <property type="entry name" value="NUCLEOID-ASSOCIATED PROTEIN YBAB"/>
    <property type="match status" value="1"/>
</dbReference>
<dbReference type="Pfam" id="PF02575">
    <property type="entry name" value="YbaB_DNA_bd"/>
    <property type="match status" value="1"/>
</dbReference>
<dbReference type="PIRSF" id="PIRSF004555">
    <property type="entry name" value="UCP004555"/>
    <property type="match status" value="1"/>
</dbReference>
<dbReference type="SUPFAM" id="SSF82607">
    <property type="entry name" value="YbaB-like"/>
    <property type="match status" value="1"/>
</dbReference>
<evidence type="ECO:0000255" key="1">
    <source>
        <dbReference type="HAMAP-Rule" id="MF_00274"/>
    </source>
</evidence>
<comment type="function">
    <text evidence="1">Binds to DNA and alters its conformation. May be involved in regulation of gene expression, nucleoid organization and DNA protection.</text>
</comment>
<comment type="subunit">
    <text evidence="1">Homodimer.</text>
</comment>
<comment type="subcellular location">
    <subcellularLocation>
        <location evidence="1">Cytoplasm</location>
        <location evidence="1">Nucleoid</location>
    </subcellularLocation>
</comment>
<comment type="similarity">
    <text evidence="1">Belongs to the YbaB/EbfC family.</text>
</comment>
<name>Y1369_SYNJA</name>
<protein>
    <recommendedName>
        <fullName evidence="1">Nucleoid-associated protein CYA_1369</fullName>
    </recommendedName>
</protein>
<keyword id="KW-0963">Cytoplasm</keyword>
<keyword id="KW-0238">DNA-binding</keyword>
<reference key="1">
    <citation type="journal article" date="2007" name="ISME J.">
        <title>Population level functional diversity in a microbial community revealed by comparative genomic and metagenomic analyses.</title>
        <authorList>
            <person name="Bhaya D."/>
            <person name="Grossman A.R."/>
            <person name="Steunou A.-S."/>
            <person name="Khuri N."/>
            <person name="Cohan F.M."/>
            <person name="Hamamura N."/>
            <person name="Melendrez M.C."/>
            <person name="Bateson M.M."/>
            <person name="Ward D.M."/>
            <person name="Heidelberg J.F."/>
        </authorList>
    </citation>
    <scope>NUCLEOTIDE SEQUENCE [LARGE SCALE GENOMIC DNA]</scope>
    <source>
        <strain>JA-3-3Ab</strain>
    </source>
</reference>
<feature type="chain" id="PRO_1000003852" description="Nucleoid-associated protein CYA_1369">
    <location>
        <begin position="1"/>
        <end position="111"/>
    </location>
</feature>
<proteinExistence type="inferred from homology"/>
<gene>
    <name type="ordered locus">CYA_1369</name>
</gene>